<proteinExistence type="inferred from homology"/>
<gene>
    <name type="primary">MT-ND1</name>
    <name type="synonym">MTND1</name>
    <name type="synonym">NADH1</name>
    <name type="synonym">ND1</name>
</gene>
<keyword id="KW-0249">Electron transport</keyword>
<keyword id="KW-0472">Membrane</keyword>
<keyword id="KW-0496">Mitochondrion</keyword>
<keyword id="KW-0999">Mitochondrion inner membrane</keyword>
<keyword id="KW-0520">NAD</keyword>
<keyword id="KW-0679">Respiratory chain</keyword>
<keyword id="KW-1278">Translocase</keyword>
<keyword id="KW-0812">Transmembrane</keyword>
<keyword id="KW-1133">Transmembrane helix</keyword>
<keyword id="KW-0813">Transport</keyword>
<keyword id="KW-0830">Ubiquinone</keyword>
<name>NU1M_ZAGBR</name>
<organism>
    <name type="scientific">Zaglossus bruijni</name>
    <name type="common">Western long-beaked echidna</name>
    <dbReference type="NCBI Taxonomy" id="33543"/>
    <lineage>
        <taxon>Eukaryota</taxon>
        <taxon>Metazoa</taxon>
        <taxon>Chordata</taxon>
        <taxon>Craniata</taxon>
        <taxon>Vertebrata</taxon>
        <taxon>Euteleostomi</taxon>
        <taxon>Mammalia</taxon>
        <taxon>Monotremata</taxon>
        <taxon>Tachyglossidae</taxon>
        <taxon>Zaglossus</taxon>
    </lineage>
</organism>
<dbReference type="EC" id="7.1.1.2" evidence="1"/>
<dbReference type="EMBL" id="AB011230">
    <property type="protein sequence ID" value="BAA32122.1"/>
    <property type="molecule type" value="Genomic_DNA"/>
</dbReference>
<dbReference type="SMR" id="O78713"/>
<dbReference type="GO" id="GO:0005743">
    <property type="term" value="C:mitochondrial inner membrane"/>
    <property type="evidence" value="ECO:0000250"/>
    <property type="project" value="UniProtKB"/>
</dbReference>
<dbReference type="GO" id="GO:0008137">
    <property type="term" value="F:NADH dehydrogenase (ubiquinone) activity"/>
    <property type="evidence" value="ECO:0000250"/>
    <property type="project" value="UniProtKB"/>
</dbReference>
<dbReference type="GO" id="GO:0006120">
    <property type="term" value="P:mitochondrial electron transport, NADH to ubiquinone"/>
    <property type="evidence" value="ECO:0000250"/>
    <property type="project" value="UniProtKB"/>
</dbReference>
<dbReference type="GO" id="GO:0032981">
    <property type="term" value="P:mitochondrial respiratory chain complex I assembly"/>
    <property type="evidence" value="ECO:0000250"/>
    <property type="project" value="UniProtKB"/>
</dbReference>
<dbReference type="HAMAP" id="MF_01350">
    <property type="entry name" value="NDH1_NuoH"/>
    <property type="match status" value="1"/>
</dbReference>
<dbReference type="InterPro" id="IPR001694">
    <property type="entry name" value="NADH_UbQ_OxRdtase_su1/FPO"/>
</dbReference>
<dbReference type="InterPro" id="IPR018086">
    <property type="entry name" value="NADH_UbQ_OxRdtase_su1_CS"/>
</dbReference>
<dbReference type="PANTHER" id="PTHR11432">
    <property type="entry name" value="NADH DEHYDROGENASE SUBUNIT 1"/>
    <property type="match status" value="1"/>
</dbReference>
<dbReference type="PANTHER" id="PTHR11432:SF3">
    <property type="entry name" value="NADH-UBIQUINONE OXIDOREDUCTASE CHAIN 1"/>
    <property type="match status" value="1"/>
</dbReference>
<dbReference type="Pfam" id="PF00146">
    <property type="entry name" value="NADHdh"/>
    <property type="match status" value="1"/>
</dbReference>
<dbReference type="PROSITE" id="PS00667">
    <property type="entry name" value="COMPLEX1_ND1_1"/>
    <property type="match status" value="1"/>
</dbReference>
<dbReference type="PROSITE" id="PS00668">
    <property type="entry name" value="COMPLEX1_ND1_2"/>
    <property type="match status" value="1"/>
</dbReference>
<accession>O78713</accession>
<protein>
    <recommendedName>
        <fullName>NADH-ubiquinone oxidoreductase chain 1</fullName>
        <ecNumber evidence="1">7.1.1.2</ecNumber>
    </recommendedName>
    <alternativeName>
        <fullName>NADH dehydrogenase subunit 1</fullName>
    </alternativeName>
</protein>
<reference key="1">
    <citation type="journal article" date="1998" name="J. Mol. Evol.">
        <title>Conflict among individual mitochondrial proteins in resolving the phylogeny of eutherian orders.</title>
        <authorList>
            <person name="Cao Y."/>
            <person name="Janke A."/>
            <person name="Waddell P.J."/>
            <person name="Westerman M."/>
            <person name="Takenaka O."/>
            <person name="Murata S."/>
            <person name="Okada N."/>
            <person name="Paeaebo S."/>
            <person name="Hasegawa M."/>
        </authorList>
    </citation>
    <scope>NUCLEOTIDE SEQUENCE [GENOMIC DNA]</scope>
    <source>
        <tissue>Liver</tissue>
    </source>
</reference>
<comment type="function">
    <text evidence="1">Core subunit of the mitochondrial membrane respiratory chain NADH dehydrogenase (Complex I) which catalyzes electron transfer from NADH through the respiratory chain, using ubiquinone as an electron acceptor. Essential for the catalytic activity and assembly of complex I.</text>
</comment>
<comment type="catalytic activity">
    <reaction evidence="1">
        <text>a ubiquinone + NADH + 5 H(+)(in) = a ubiquinol + NAD(+) + 4 H(+)(out)</text>
        <dbReference type="Rhea" id="RHEA:29091"/>
        <dbReference type="Rhea" id="RHEA-COMP:9565"/>
        <dbReference type="Rhea" id="RHEA-COMP:9566"/>
        <dbReference type="ChEBI" id="CHEBI:15378"/>
        <dbReference type="ChEBI" id="CHEBI:16389"/>
        <dbReference type="ChEBI" id="CHEBI:17976"/>
        <dbReference type="ChEBI" id="CHEBI:57540"/>
        <dbReference type="ChEBI" id="CHEBI:57945"/>
        <dbReference type="EC" id="7.1.1.2"/>
    </reaction>
</comment>
<comment type="subunit">
    <text evidence="2">Core subunit of respiratory chain NADH dehydrogenase (Complex I) which is composed of 45 different subunits.</text>
</comment>
<comment type="subcellular location">
    <subcellularLocation>
        <location evidence="2">Mitochondrion inner membrane</location>
        <topology evidence="3">Multi-pass membrane protein</topology>
    </subcellularLocation>
</comment>
<comment type="similarity">
    <text evidence="4">Belongs to the complex I subunit 1 family.</text>
</comment>
<geneLocation type="mitochondrion"/>
<evidence type="ECO:0000250" key="1">
    <source>
        <dbReference type="UniProtKB" id="P03886"/>
    </source>
</evidence>
<evidence type="ECO:0000250" key="2">
    <source>
        <dbReference type="UniProtKB" id="P03887"/>
    </source>
</evidence>
<evidence type="ECO:0000255" key="3"/>
<evidence type="ECO:0000305" key="4"/>
<feature type="chain" id="PRO_0000117503" description="NADH-ubiquinone oxidoreductase chain 1">
    <location>
        <begin position="1" status="less than"/>
        <end position="303" status="greater than"/>
    </location>
</feature>
<feature type="transmembrane region" description="Helical" evidence="3">
    <location>
        <begin position="56"/>
        <end position="76"/>
    </location>
</feature>
<feature type="transmembrane region" description="Helical" evidence="3">
    <location>
        <begin position="88"/>
        <end position="108"/>
    </location>
</feature>
<feature type="transmembrane region" description="Helical" evidence="3">
    <location>
        <begin position="132"/>
        <end position="152"/>
    </location>
</feature>
<feature type="transmembrane region" description="Helical" evidence="3">
    <location>
        <begin position="159"/>
        <end position="179"/>
    </location>
</feature>
<feature type="transmembrane region" description="Helical" evidence="3">
    <location>
        <begin position="219"/>
        <end position="239"/>
    </location>
</feature>
<feature type="transmembrane region" description="Helical" evidence="3">
    <location>
        <begin position="241"/>
        <end position="261"/>
    </location>
</feature>
<feature type="transmembrane region" description="Helical" evidence="3">
    <location>
        <begin position="282"/>
        <end position="302"/>
    </location>
</feature>
<feature type="non-terminal residue">
    <location>
        <position position="1"/>
    </location>
</feature>
<feature type="non-terminal residue">
    <location>
        <position position="303"/>
    </location>
</feature>
<sequence>ILLAVAFLTLIERKILGYMQFRKGPNIVGPHGLLQPIADAVKLFIKEPLRPMTSSIYMFILAPILALSLALTIWVPLPMPLPLIDLNLGLLFVLSVSGLSVYSILWSGWASNSKYALTGALRAVAQTISYEVTLAIILLSIMLINGSFTLTTLNLTQEFMWLVVPTWPLMLTRFISTLAETNRAPFDLTEGESELVSGFNVEYAAGPFAMFFLAEYANIIIMNALTVILFFGAYHLIFLPELSTINFMIKTMMLTSLFLWIRASYPRFRYDQLMHLLWKNFLPITLVTCLWFIMLPLALSWIP</sequence>